<proteinExistence type="inferred from homology"/>
<reference key="1">
    <citation type="submission" date="2010-03" db="EMBL/GenBank/DDBJ databases">
        <title>Effect of avenin-like genes on gluten elasticity of wheat.</title>
        <authorList>
            <person name="Wang H.W."/>
            <person name="Ma F.Y."/>
            <person name="Wang Y.S."/>
            <person name="He G.Y."/>
        </authorList>
    </citation>
    <scope>NUCLEOTIDE SEQUENCE [GENOMIC DNA]</scope>
</reference>
<sequence length="284" mass="32433">MKVFILALLALAATTAIAQLETTCSQGFGQSQQQQQPGQRQLLEQMKPCVAFLQQKCSPLRMPFLQTQVEQLSSCQIVQYQCCQQLAQIPERTRCHAIHIVVEAIIQQQSQQQWQEPQQQAQHKSMRMLLENLSLMCNIYVPVQCQQQQQLGQQQQQQLQEQLTPCTTFLQQQCSPVTVPFPQIPVDQPTSCQNVQHQCCRQLSQIPEQFRCQAIHNVAEAIRQQQPQQQWQGMYQPQQPAQLESIRMSLQALRSMRSIYIPVQCPAPTTYNIPLVATYTGGAC</sequence>
<dbReference type="EMBL" id="HM027638">
    <property type="protein sequence ID" value="ADG45760.1"/>
    <property type="molecule type" value="Genomic_DNA"/>
</dbReference>
<dbReference type="SMR" id="D6QZM8"/>
<dbReference type="Proteomes" id="UP000019116">
    <property type="component" value="Unplaced"/>
</dbReference>
<dbReference type="ExpressionAtlas" id="D6QZM8">
    <property type="expression patterns" value="baseline and differential"/>
</dbReference>
<dbReference type="GO" id="GO:0045735">
    <property type="term" value="F:nutrient reservoir activity"/>
    <property type="evidence" value="ECO:0007669"/>
    <property type="project" value="UniProtKB-KW"/>
</dbReference>
<dbReference type="CDD" id="cd00261">
    <property type="entry name" value="AAI_SS"/>
    <property type="match status" value="2"/>
</dbReference>
<dbReference type="Gene3D" id="1.10.110.10">
    <property type="entry name" value="Plant lipid-transfer and hydrophobic proteins"/>
    <property type="match status" value="2"/>
</dbReference>
<dbReference type="InterPro" id="IPR036312">
    <property type="entry name" value="Bifun_inhib/LTP/seed_sf"/>
</dbReference>
<dbReference type="InterPro" id="IPR016140">
    <property type="entry name" value="Bifunc_inhib/LTP/seed_store"/>
</dbReference>
<dbReference type="InterPro" id="IPR001954">
    <property type="entry name" value="Glia_glutenin"/>
</dbReference>
<dbReference type="PANTHER" id="PTHR33454:SF11">
    <property type="entry name" value="AVENIN-LIKE B5"/>
    <property type="match status" value="1"/>
</dbReference>
<dbReference type="PANTHER" id="PTHR33454">
    <property type="entry name" value="PROLAMIN PPROL 14P"/>
    <property type="match status" value="1"/>
</dbReference>
<dbReference type="Pfam" id="PF13016">
    <property type="entry name" value="Gliadin"/>
    <property type="match status" value="2"/>
</dbReference>
<dbReference type="PRINTS" id="PR00208">
    <property type="entry name" value="GLIADGLUTEN"/>
</dbReference>
<dbReference type="PRINTS" id="PR00209">
    <property type="entry name" value="GLIADIN"/>
</dbReference>
<dbReference type="SMART" id="SM00499">
    <property type="entry name" value="AAI"/>
    <property type="match status" value="2"/>
</dbReference>
<dbReference type="SUPFAM" id="SSF47699">
    <property type="entry name" value="Bifunctional inhibitor/lipid-transfer protein/seed storage 2S albumin"/>
    <property type="match status" value="2"/>
</dbReference>
<organism>
    <name type="scientific">Triticum aestivum</name>
    <name type="common">Wheat</name>
    <dbReference type="NCBI Taxonomy" id="4565"/>
    <lineage>
        <taxon>Eukaryota</taxon>
        <taxon>Viridiplantae</taxon>
        <taxon>Streptophyta</taxon>
        <taxon>Embryophyta</taxon>
        <taxon>Tracheophyta</taxon>
        <taxon>Spermatophyta</taxon>
        <taxon>Magnoliopsida</taxon>
        <taxon>Liliopsida</taxon>
        <taxon>Poales</taxon>
        <taxon>Poaceae</taxon>
        <taxon>BOP clade</taxon>
        <taxon>Pooideae</taxon>
        <taxon>Triticodae</taxon>
        <taxon>Triticeae</taxon>
        <taxon>Triticinae</taxon>
        <taxon>Triticum</taxon>
    </lineage>
</organism>
<accession>D6QZM8</accession>
<comment type="function">
    <text evidence="1">Seed storage protein. Might be integrated via inter-chain disulfide bonds within the glutenin polymer (By similarity).</text>
</comment>
<comment type="PTM">
    <text evidence="3">Contains disulfide bonds.</text>
</comment>
<comment type="similarity">
    <text evidence="3">Belongs to the prolamin family.</text>
</comment>
<feature type="signal peptide" evidence="2">
    <location>
        <begin position="1"/>
        <end position="18"/>
    </location>
</feature>
<feature type="chain" id="PRO_0000410691" description="Avenin-like b10">
    <location>
        <begin position="19"/>
        <end position="284"/>
    </location>
</feature>
<keyword id="KW-1015">Disulfide bond</keyword>
<keyword id="KW-1185">Reference proteome</keyword>
<keyword id="KW-0708">Seed storage protein</keyword>
<keyword id="KW-0732">Signal</keyword>
<keyword id="KW-0758">Storage protein</keyword>
<protein>
    <recommendedName>
        <fullName>Avenin-like b10</fullName>
    </recommendedName>
</protein>
<name>AVLBA_WHEAT</name>
<evidence type="ECO:0000250" key="1"/>
<evidence type="ECO:0000255" key="2"/>
<evidence type="ECO:0000305" key="3"/>